<gene>
    <name evidence="3" type="primary">sqvA</name>
    <name evidence="6" type="ordered locus">BMQ_3648</name>
</gene>
<protein>
    <recommendedName>
        <fullName evidence="5">6-deoxy-6-sulfo-D-fructose transaldolase</fullName>
        <shortName evidence="4">SF transaldolase</shortName>
        <shortName evidence="4">SF-TAL</shortName>
        <shortName evidence="4">Sulfofructose transaldolase</shortName>
        <ecNumber evidence="1 2">2.2.1.14</ecNumber>
    </recommendedName>
</protein>
<keyword id="KW-0002">3D-structure</keyword>
<keyword id="KW-0119">Carbohydrate metabolism</keyword>
<keyword id="KW-1185">Reference proteome</keyword>
<keyword id="KW-0704">Schiff base</keyword>
<keyword id="KW-0808">Transferase</keyword>
<comment type="function">
    <text evidence="1 2">Part of the sulfo-TAL (or sulfo-SFT) pathway, a D-sulfoquinovose degradation pathway that produces sulfolactate (SL) (PubMed:33036753). Catalyzes the conversion of 6-deoxy-6-sulfo-D-fructose (SF) and glyceraldehyde 3-phosphate (GAP) into fructose-6-phosphate (F6P) and 3-sulfolactaldehyde (SLA) (PubMed:33036753, PubMed:36805128). Can also catalyze the SF-cleavage with erythrose 4-phosphate (E4P) as acceptor, forming 3-sulfolactaldehyde (SLA) and sedoheptulose 7-phosphate (S7P) (PubMed:36805128).</text>
</comment>
<comment type="catalytic activity">
    <reaction evidence="1 2">
        <text>6-deoxy-6-sulfo-D-fructose + D-glyceraldehyde 3-phosphate = D-fructose 6-phosphate + (2S)-3-sulfolactaldehyde</text>
        <dbReference type="Rhea" id="RHEA:66716"/>
        <dbReference type="ChEBI" id="CHEBI:59776"/>
        <dbReference type="ChEBI" id="CHEBI:61527"/>
        <dbReference type="ChEBI" id="CHEBI:77133"/>
        <dbReference type="ChEBI" id="CHEBI:90109"/>
        <dbReference type="EC" id="2.2.1.14"/>
    </reaction>
    <physiologicalReaction direction="left-to-right" evidence="1">
        <dbReference type="Rhea" id="RHEA:66717"/>
    </physiologicalReaction>
</comment>
<comment type="catalytic activity">
    <reaction evidence="2">
        <text>6-deoxy-6-sulfo-D-fructose + D-erythrose 4-phosphate = (2S)-3-sulfolactaldehyde + D-sedoheptulose 7-phosphate</text>
        <dbReference type="Rhea" id="RHEA:66920"/>
        <dbReference type="ChEBI" id="CHEBI:16897"/>
        <dbReference type="ChEBI" id="CHEBI:57483"/>
        <dbReference type="ChEBI" id="CHEBI:77133"/>
        <dbReference type="ChEBI" id="CHEBI:90109"/>
        <dbReference type="EC" id="2.2.1.14"/>
    </reaction>
</comment>
<comment type="subunit">
    <text evidence="2">Homodecamer; dimer of pentamers.</text>
</comment>
<comment type="similarity">
    <text evidence="5">Belongs to the transaldolase family.</text>
</comment>
<sequence>MKYFLDSAILEEIRYAYENWAIDGVTTNPRHIMNSGKPFLTVLDEFASEFKGVENFPISVEINPHLDNAKDMVEEGTKIAKLSSNFVIKIPCTEPGLIAAKEFEKQGISTNVTLVFSPSQALQPARIGAKFVSPFVGWKENSGDDTTQYIQDIVNIYKNYNYNTEIIVAALRNGKQIVDAAKAGAHIVTCGFDVYKESFQHAFTDYGLNKFRNAWDNTVTEAPVLK</sequence>
<accession>D5E1T2</accession>
<reference key="1">
    <citation type="journal article" date="2011" name="J. Bacteriol.">
        <title>Genome sequences of the biotechnologically important Bacillus megaterium strains QM B1551 and DSM319.</title>
        <authorList>
            <person name="Eppinger M."/>
            <person name="Bunk B."/>
            <person name="Johns M.A."/>
            <person name="Edirisinghe J.N."/>
            <person name="Kutumbaka K.K."/>
            <person name="Koenig S.S."/>
            <person name="Creasy H.H."/>
            <person name="Rosovitz M.J."/>
            <person name="Riley D.R."/>
            <person name="Daugherty S."/>
            <person name="Martin M."/>
            <person name="Elbourne L.D."/>
            <person name="Paulsen I."/>
            <person name="Biedendieck R."/>
            <person name="Braun C."/>
            <person name="Grayburn S."/>
            <person name="Dhingra S."/>
            <person name="Lukyanchuk V."/>
            <person name="Ball B."/>
            <person name="Ul-Qamar R."/>
            <person name="Seibel J."/>
            <person name="Bremer E."/>
            <person name="Jahn D."/>
            <person name="Ravel J."/>
            <person name="Vary P.S."/>
        </authorList>
    </citation>
    <scope>NUCLEOTIDE SEQUENCE [LARGE SCALE GENOMIC DNA]</scope>
    <source>
        <strain>ATCC 12872 / DSM 1804 / QMB1551</strain>
    </source>
</reference>
<reference key="2">
    <citation type="journal article" date="2020" name="Biochem. Biophys. Res. Commun.">
        <title>A transaldolase-dependent sulfoglycolysis pathway in Bacillus megaterium DSM 1804.</title>
        <authorList>
            <person name="Liu Y."/>
            <person name="Wei Y."/>
            <person name="Zhou Y."/>
            <person name="Ang E.L."/>
            <person name="Zhao H."/>
            <person name="Zhang Y."/>
        </authorList>
    </citation>
    <scope>FUNCTION</scope>
    <scope>CATALYTIC ACTIVITY</scope>
    <source>
        <strain>ATCC 12872 / DSM 1804 / QMB1551</strain>
    </source>
</reference>
<reference evidence="7 8 9 10" key="3">
    <citation type="journal article" date="2023" name="Structure">
        <title>Structure and mechanism of sulfofructose transaldolase, a key enzyme in sulfoquinovose metabolism.</title>
        <authorList>
            <person name="Snow A.J.D."/>
            <person name="Sharma M."/>
            <person name="Abayakoon P."/>
            <person name="Williams S.J."/>
            <person name="Blaza J.N."/>
            <person name="Davies G.J."/>
        </authorList>
    </citation>
    <scope>STRUCTURE BY ELECTRON MICROSCOPY (2.10 ANGSTROMS) OF APOENZYME AND OF THE SULFOFRUCTOSE TRANSALDOLASE SCHIFF BASE INTERMEDIATE</scope>
    <scope>X-RAY CRYSTALLOGRAPHY (3.20 ANGSTROMS) OF APOENZYME</scope>
    <scope>FUNCTION</scope>
    <scope>CATALYTIC ACTIVITY</scope>
    <scope>SUBUNIT</scope>
    <scope>ACTIVE SITE</scope>
    <source>
        <strain>DSM 1909</strain>
    </source>
</reference>
<proteinExistence type="evidence at protein level"/>
<evidence type="ECO:0000269" key="1">
    <source>
    </source>
</evidence>
<evidence type="ECO:0000269" key="2">
    <source>
    </source>
</evidence>
<evidence type="ECO:0000303" key="3">
    <source>
    </source>
</evidence>
<evidence type="ECO:0000303" key="4">
    <source>
    </source>
</evidence>
<evidence type="ECO:0000305" key="5"/>
<evidence type="ECO:0000312" key="6">
    <source>
        <dbReference type="EMBL" id="ADE70661.1"/>
    </source>
</evidence>
<evidence type="ECO:0007744" key="7">
    <source>
        <dbReference type="PDB" id="8BC2"/>
    </source>
</evidence>
<evidence type="ECO:0007744" key="8">
    <source>
        <dbReference type="PDB" id="8BC3"/>
    </source>
</evidence>
<evidence type="ECO:0007744" key="9">
    <source>
        <dbReference type="PDB" id="8BC4"/>
    </source>
</evidence>
<evidence type="ECO:0007744" key="10">
    <source>
        <dbReference type="PDB" id="8C4I"/>
    </source>
</evidence>
<evidence type="ECO:0007829" key="11">
    <source>
        <dbReference type="PDB" id="8BC3"/>
    </source>
</evidence>
<organism>
    <name type="scientific">Priestia megaterium (strain ATCC 12872 / QMB1551)</name>
    <name type="common">Bacillus megaterium</name>
    <dbReference type="NCBI Taxonomy" id="545693"/>
    <lineage>
        <taxon>Bacteria</taxon>
        <taxon>Bacillati</taxon>
        <taxon>Bacillota</taxon>
        <taxon>Bacilli</taxon>
        <taxon>Bacillales</taxon>
        <taxon>Bacillaceae</taxon>
        <taxon>Priestia</taxon>
    </lineage>
</organism>
<name>SFTAL_PRIM1</name>
<dbReference type="EC" id="2.2.1.14" evidence="1 2"/>
<dbReference type="EMBL" id="CP001983">
    <property type="protein sequence ID" value="ADE70661.1"/>
    <property type="molecule type" value="Genomic_DNA"/>
</dbReference>
<dbReference type="RefSeq" id="WP_013058335.1">
    <property type="nucleotide sequence ID" value="NC_014019.1"/>
</dbReference>
<dbReference type="PDB" id="8BC2">
    <property type="method" value="EM"/>
    <property type="resolution" value="2.60 A"/>
    <property type="chains" value="A/B/C/D/E/F/G/H/I/J=1-219"/>
</dbReference>
<dbReference type="PDB" id="8BC3">
    <property type="method" value="EM"/>
    <property type="resolution" value="2.10 A"/>
    <property type="chains" value="A/B/C/D/E/F/G/H/I/J=1-226"/>
</dbReference>
<dbReference type="PDB" id="8BC4">
    <property type="method" value="EM"/>
    <property type="resolution" value="2.70 A"/>
    <property type="chains" value="A/B/C/D/E/F/G/H/I/J=1-219"/>
</dbReference>
<dbReference type="PDB" id="8C4I">
    <property type="method" value="X-ray"/>
    <property type="resolution" value="3.20 A"/>
    <property type="chains" value="A/B/C/D/E/F/G/H/J/K=1-226"/>
</dbReference>
<dbReference type="PDBsum" id="8BC2"/>
<dbReference type="PDBsum" id="8BC3"/>
<dbReference type="PDBsum" id="8BC4"/>
<dbReference type="PDBsum" id="8C4I"/>
<dbReference type="SMR" id="D5E1T2"/>
<dbReference type="STRING" id="545693.BMQ_3648"/>
<dbReference type="KEGG" id="bmq:BMQ_3648"/>
<dbReference type="eggNOG" id="COG0176">
    <property type="taxonomic scope" value="Bacteria"/>
</dbReference>
<dbReference type="HOGENOM" id="CLU_079764_0_0_9"/>
<dbReference type="Proteomes" id="UP000000935">
    <property type="component" value="Chromosome"/>
</dbReference>
<dbReference type="GO" id="GO:0016832">
    <property type="term" value="F:aldehyde-lyase activity"/>
    <property type="evidence" value="ECO:0007669"/>
    <property type="project" value="InterPro"/>
</dbReference>
<dbReference type="GO" id="GO:0004801">
    <property type="term" value="F:transaldolase activity"/>
    <property type="evidence" value="ECO:0007669"/>
    <property type="project" value="UniProtKB-EC"/>
</dbReference>
<dbReference type="GO" id="GO:0005975">
    <property type="term" value="P:carbohydrate metabolic process"/>
    <property type="evidence" value="ECO:0007669"/>
    <property type="project" value="InterPro"/>
</dbReference>
<dbReference type="CDD" id="cd00956">
    <property type="entry name" value="Transaldolase_FSA"/>
    <property type="match status" value="1"/>
</dbReference>
<dbReference type="Gene3D" id="3.20.20.70">
    <property type="entry name" value="Aldolase class I"/>
    <property type="match status" value="1"/>
</dbReference>
<dbReference type="InterPro" id="IPR013785">
    <property type="entry name" value="Aldolase_TIM"/>
</dbReference>
<dbReference type="InterPro" id="IPR001585">
    <property type="entry name" value="TAL/FSA"/>
</dbReference>
<dbReference type="InterPro" id="IPR033919">
    <property type="entry name" value="TSA/FSA_arc/bac"/>
</dbReference>
<dbReference type="PANTHER" id="PTHR10683:SF40">
    <property type="entry name" value="FRUCTOSE-6-PHOSPHATE ALDOLASE 1-RELATED"/>
    <property type="match status" value="1"/>
</dbReference>
<dbReference type="PANTHER" id="PTHR10683">
    <property type="entry name" value="TRANSALDOLASE"/>
    <property type="match status" value="1"/>
</dbReference>
<dbReference type="Pfam" id="PF00923">
    <property type="entry name" value="TAL_FSA"/>
    <property type="match status" value="1"/>
</dbReference>
<dbReference type="SUPFAM" id="SSF51569">
    <property type="entry name" value="Aldolase"/>
    <property type="match status" value="1"/>
</dbReference>
<feature type="chain" id="PRO_0000458972" description="6-deoxy-6-sulfo-D-fructose transaldolase">
    <location>
        <begin position="1"/>
        <end position="226"/>
    </location>
</feature>
<feature type="active site" description="Schiff-base intermediate with substrate" evidence="2 8 9">
    <location>
        <position position="89"/>
    </location>
</feature>
<feature type="strand" evidence="11">
    <location>
        <begin position="2"/>
        <end position="6"/>
    </location>
</feature>
<feature type="helix" evidence="11">
    <location>
        <begin position="10"/>
        <end position="19"/>
    </location>
</feature>
<feature type="strand" evidence="11">
    <location>
        <begin position="24"/>
        <end position="26"/>
    </location>
</feature>
<feature type="helix" evidence="11">
    <location>
        <begin position="29"/>
        <end position="35"/>
    </location>
</feature>
<feature type="helix" evidence="11">
    <location>
        <begin position="39"/>
        <end position="49"/>
    </location>
</feature>
<feature type="strand" evidence="11">
    <location>
        <begin position="58"/>
        <end position="61"/>
    </location>
</feature>
<feature type="helix" evidence="11">
    <location>
        <begin position="69"/>
        <end position="80"/>
    </location>
</feature>
<feature type="strand" evidence="11">
    <location>
        <begin position="86"/>
        <end position="93"/>
    </location>
</feature>
<feature type="helix" evidence="11">
    <location>
        <begin position="94"/>
        <end position="105"/>
    </location>
</feature>
<feature type="strand" evidence="11">
    <location>
        <begin position="110"/>
        <end position="115"/>
    </location>
</feature>
<feature type="helix" evidence="11">
    <location>
        <begin position="118"/>
        <end position="126"/>
    </location>
</feature>
<feature type="strand" evidence="11">
    <location>
        <begin position="130"/>
        <end position="135"/>
    </location>
</feature>
<feature type="helix" evidence="11">
    <location>
        <begin position="137"/>
        <end position="141"/>
    </location>
</feature>
<feature type="helix" evidence="11">
    <location>
        <begin position="150"/>
        <end position="159"/>
    </location>
</feature>
<feature type="strand" evidence="11">
    <location>
        <begin position="165"/>
        <end position="170"/>
    </location>
</feature>
<feature type="helix" evidence="11">
    <location>
        <begin position="174"/>
        <end position="183"/>
    </location>
</feature>
<feature type="strand" evidence="11">
    <location>
        <begin position="186"/>
        <end position="190"/>
    </location>
</feature>
<feature type="helix" evidence="11">
    <location>
        <begin position="192"/>
        <end position="198"/>
    </location>
</feature>
<feature type="helix" evidence="11">
    <location>
        <begin position="202"/>
        <end position="216"/>
    </location>
</feature>